<name>SSRP_CLOPE</name>
<keyword id="KW-0963">Cytoplasm</keyword>
<keyword id="KW-1185">Reference proteome</keyword>
<keyword id="KW-0694">RNA-binding</keyword>
<gene>
    <name evidence="1" type="primary">smpB</name>
    <name type="ordered locus">CPE1295</name>
</gene>
<sequence length="156" mass="18151">MAKRKDNKTLAENRKARHDYFVDEAMEAGIALVGTEVKSIRNGRVNLKDCYADINNGEIFINNMHISPYEQGNIFNVDPLRKRKLLLHKSEIQRLIGIVQQQGVALIPLSLYLKNGRVKVNLGVCRGKKNYDKRDTMLEKAHKREMDRQLKERNRY</sequence>
<feature type="chain" id="PRO_0000102935" description="SsrA-binding protein">
    <location>
        <begin position="1"/>
        <end position="156"/>
    </location>
</feature>
<organism>
    <name type="scientific">Clostridium perfringens (strain 13 / Type A)</name>
    <dbReference type="NCBI Taxonomy" id="195102"/>
    <lineage>
        <taxon>Bacteria</taxon>
        <taxon>Bacillati</taxon>
        <taxon>Bacillota</taxon>
        <taxon>Clostridia</taxon>
        <taxon>Eubacteriales</taxon>
        <taxon>Clostridiaceae</taxon>
        <taxon>Clostridium</taxon>
    </lineage>
</organism>
<accession>Q8XKU7</accession>
<proteinExistence type="inferred from homology"/>
<evidence type="ECO:0000255" key="1">
    <source>
        <dbReference type="HAMAP-Rule" id="MF_00023"/>
    </source>
</evidence>
<comment type="function">
    <text evidence="1">Required for rescue of stalled ribosomes mediated by trans-translation. Binds to transfer-messenger RNA (tmRNA), required for stable association of tmRNA with ribosomes. tmRNA and SmpB together mimic tRNA shape, replacing the anticodon stem-loop with SmpB. tmRNA is encoded by the ssrA gene; the 2 termini fold to resemble tRNA(Ala) and it encodes a 'tag peptide', a short internal open reading frame. During trans-translation Ala-aminoacylated tmRNA acts like a tRNA, entering the A-site of stalled ribosomes, displacing the stalled mRNA. The ribosome then switches to translate the ORF on the tmRNA; the nascent peptide is terminated with the 'tag peptide' encoded by the tmRNA and targeted for degradation. The ribosome is freed to recommence translation, which seems to be the essential function of trans-translation.</text>
</comment>
<comment type="subcellular location">
    <subcellularLocation>
        <location evidence="1">Cytoplasm</location>
    </subcellularLocation>
    <text evidence="1">The tmRNA-SmpB complex associates with stalled 70S ribosomes.</text>
</comment>
<comment type="similarity">
    <text evidence="1">Belongs to the SmpB family.</text>
</comment>
<dbReference type="EMBL" id="BA000016">
    <property type="protein sequence ID" value="BAB81001.1"/>
    <property type="molecule type" value="Genomic_DNA"/>
</dbReference>
<dbReference type="RefSeq" id="WP_003456486.1">
    <property type="nucleotide sequence ID" value="NC_003366.1"/>
</dbReference>
<dbReference type="SMR" id="Q8XKU7"/>
<dbReference type="STRING" id="195102.gene:10490558"/>
<dbReference type="GeneID" id="93002171"/>
<dbReference type="KEGG" id="cpe:CPE1295"/>
<dbReference type="HOGENOM" id="CLU_108953_0_0_9"/>
<dbReference type="Proteomes" id="UP000000818">
    <property type="component" value="Chromosome"/>
</dbReference>
<dbReference type="GO" id="GO:0005829">
    <property type="term" value="C:cytosol"/>
    <property type="evidence" value="ECO:0007669"/>
    <property type="project" value="TreeGrafter"/>
</dbReference>
<dbReference type="GO" id="GO:0003723">
    <property type="term" value="F:RNA binding"/>
    <property type="evidence" value="ECO:0007669"/>
    <property type="project" value="UniProtKB-UniRule"/>
</dbReference>
<dbReference type="GO" id="GO:0070929">
    <property type="term" value="P:trans-translation"/>
    <property type="evidence" value="ECO:0007669"/>
    <property type="project" value="UniProtKB-UniRule"/>
</dbReference>
<dbReference type="CDD" id="cd09294">
    <property type="entry name" value="SmpB"/>
    <property type="match status" value="1"/>
</dbReference>
<dbReference type="Gene3D" id="2.40.280.10">
    <property type="match status" value="1"/>
</dbReference>
<dbReference type="HAMAP" id="MF_00023">
    <property type="entry name" value="SmpB"/>
    <property type="match status" value="1"/>
</dbReference>
<dbReference type="InterPro" id="IPR023620">
    <property type="entry name" value="SmpB"/>
</dbReference>
<dbReference type="InterPro" id="IPR000037">
    <property type="entry name" value="SsrA-bd_prot"/>
</dbReference>
<dbReference type="InterPro" id="IPR020081">
    <property type="entry name" value="SsrA-bd_prot_CS"/>
</dbReference>
<dbReference type="NCBIfam" id="NF003843">
    <property type="entry name" value="PRK05422.1"/>
    <property type="match status" value="1"/>
</dbReference>
<dbReference type="NCBIfam" id="TIGR00086">
    <property type="entry name" value="smpB"/>
    <property type="match status" value="1"/>
</dbReference>
<dbReference type="PANTHER" id="PTHR30308:SF2">
    <property type="entry name" value="SSRA-BINDING PROTEIN"/>
    <property type="match status" value="1"/>
</dbReference>
<dbReference type="PANTHER" id="PTHR30308">
    <property type="entry name" value="TMRNA-BINDING COMPONENT OF TRANS-TRANSLATION TAGGING COMPLEX"/>
    <property type="match status" value="1"/>
</dbReference>
<dbReference type="Pfam" id="PF01668">
    <property type="entry name" value="SmpB"/>
    <property type="match status" value="1"/>
</dbReference>
<dbReference type="SUPFAM" id="SSF74982">
    <property type="entry name" value="Small protein B (SmpB)"/>
    <property type="match status" value="1"/>
</dbReference>
<dbReference type="PROSITE" id="PS01317">
    <property type="entry name" value="SSRP"/>
    <property type="match status" value="1"/>
</dbReference>
<reference key="1">
    <citation type="journal article" date="2002" name="Proc. Natl. Acad. Sci. U.S.A.">
        <title>Complete genome sequence of Clostridium perfringens, an anaerobic flesh-eater.</title>
        <authorList>
            <person name="Shimizu T."/>
            <person name="Ohtani K."/>
            <person name="Hirakawa H."/>
            <person name="Ohshima K."/>
            <person name="Yamashita A."/>
            <person name="Shiba T."/>
            <person name="Ogasawara N."/>
            <person name="Hattori M."/>
            <person name="Kuhara S."/>
            <person name="Hayashi H."/>
        </authorList>
    </citation>
    <scope>NUCLEOTIDE SEQUENCE [LARGE SCALE GENOMIC DNA]</scope>
    <source>
        <strain>13 / Type A</strain>
    </source>
</reference>
<protein>
    <recommendedName>
        <fullName evidence="1">SsrA-binding protein</fullName>
    </recommendedName>
    <alternativeName>
        <fullName evidence="1">Small protein B</fullName>
    </alternativeName>
</protein>